<evidence type="ECO:0000250" key="1"/>
<evidence type="ECO:0000250" key="2">
    <source>
        <dbReference type="UniProtKB" id="P70274"/>
    </source>
</evidence>
<evidence type="ECO:0000255" key="3"/>
<evidence type="ECO:0000256" key="4">
    <source>
        <dbReference type="SAM" id="MobiDB-lite"/>
    </source>
</evidence>
<evidence type="ECO:0000269" key="5">
    <source>
    </source>
</evidence>
<evidence type="ECO:0000269" key="6">
    <source>
    </source>
</evidence>
<evidence type="ECO:0000269" key="7">
    <source>
    </source>
</evidence>
<evidence type="ECO:0000269" key="8">
    <source>
    </source>
</evidence>
<evidence type="ECO:0000269" key="9">
    <source>
    </source>
</evidence>
<evidence type="ECO:0000269" key="10">
    <source ref="3"/>
</evidence>
<evidence type="ECO:0000303" key="11">
    <source>
    </source>
</evidence>
<evidence type="ECO:0000305" key="12"/>
<evidence type="ECO:0000312" key="13">
    <source>
        <dbReference type="HGNC" id="HGNC:10751"/>
    </source>
</evidence>
<evidence type="ECO:0007744" key="14">
    <source>
    </source>
</evidence>
<comment type="function">
    <text>Might be responsible for some of the extracellular antioxidant defense properties of selenium or might be involved in the transport of selenium. May supply selenium to tissues such as brain and testis.</text>
</comment>
<comment type="subcellular location">
    <subcellularLocation>
        <location evidence="9">Secreted</location>
    </subcellularLocation>
    <text evidence="2">Passes from plasma into the glomerular filtrate where it is removed by endocytosis mediated by LRP2 in the proximal tubule epithelium.</text>
</comment>
<comment type="tissue specificity">
    <text>Made in the liver and heart and secreted into the plasma. It is also found in the kidney.</text>
</comment>
<comment type="domain">
    <text evidence="2">The C-terminus is not required for endocytic uptake in the proximal tubule epithelium.</text>
</comment>
<comment type="PTM">
    <text>Phosphorylation sites are present in the extracellular medium.</text>
</comment>
<comment type="similarity">
    <text evidence="12">Belongs to the selenoprotein P family.</text>
</comment>
<comment type="online information" name="Atlas of Genetics and Cytogenetics in Oncology and Haematology">
    <link uri="https://atlasgeneticsoncology.org/gene/46513/SEPP1"/>
</comment>
<name>SEPP1_HUMAN</name>
<reference key="1">
    <citation type="journal article" date="1993" name="Proc. Natl. Acad. Sci. U.S.A.">
        <title>Conserved nucleotide sequences in the open reading frame and 3' untranslated region of selenoprotein P mRNA.</title>
        <authorList>
            <person name="Hill K.E."/>
            <person name="Lloyd R.S."/>
            <person name="Burk R.F."/>
        </authorList>
    </citation>
    <scope>NUCLEOTIDE SEQUENCE [MRNA]</scope>
    <source>
        <tissue>Heart</tissue>
        <tissue>Liver</tissue>
    </source>
</reference>
<reference key="2">
    <citation type="submission" date="2010-11" db="EMBL/GenBank/DDBJ databases">
        <authorList>
            <person name="Hill K.E."/>
        </authorList>
    </citation>
    <scope>SEQUENCE REVISION TO 59; 300; 318; 330; 345; 352; 367; 369; 376 AND 378</scope>
</reference>
<reference key="3">
    <citation type="submission" date="2005-04" db="EMBL/GenBank/DDBJ databases">
        <authorList>
            <consortium name="NIEHS SNPs program"/>
        </authorList>
    </citation>
    <scope>NUCLEOTIDE SEQUENCE [GENOMIC DNA]</scope>
    <scope>VARIANTS SER-112; THR-234; GLN-278; PRO-314 AND CYS-368</scope>
</reference>
<reference key="4">
    <citation type="journal article" date="2004" name="Nature">
        <title>The DNA sequence and comparative analysis of human chromosome 5.</title>
        <authorList>
            <person name="Schmutz J."/>
            <person name="Martin J."/>
            <person name="Terry A."/>
            <person name="Couronne O."/>
            <person name="Grimwood J."/>
            <person name="Lowry S."/>
            <person name="Gordon L.A."/>
            <person name="Scott D."/>
            <person name="Xie G."/>
            <person name="Huang W."/>
            <person name="Hellsten U."/>
            <person name="Tran-Gyamfi M."/>
            <person name="She X."/>
            <person name="Prabhakar S."/>
            <person name="Aerts A."/>
            <person name="Altherr M."/>
            <person name="Bajorek E."/>
            <person name="Black S."/>
            <person name="Branscomb E."/>
            <person name="Caoile C."/>
            <person name="Challacombe J.F."/>
            <person name="Chan Y.M."/>
            <person name="Denys M."/>
            <person name="Detter J.C."/>
            <person name="Escobar J."/>
            <person name="Flowers D."/>
            <person name="Fotopulos D."/>
            <person name="Glavina T."/>
            <person name="Gomez M."/>
            <person name="Gonzales E."/>
            <person name="Goodstein D."/>
            <person name="Grigoriev I."/>
            <person name="Groza M."/>
            <person name="Hammon N."/>
            <person name="Hawkins T."/>
            <person name="Haydu L."/>
            <person name="Israni S."/>
            <person name="Jett J."/>
            <person name="Kadner K."/>
            <person name="Kimball H."/>
            <person name="Kobayashi A."/>
            <person name="Lopez F."/>
            <person name="Lou Y."/>
            <person name="Martinez D."/>
            <person name="Medina C."/>
            <person name="Morgan J."/>
            <person name="Nandkeshwar R."/>
            <person name="Noonan J.P."/>
            <person name="Pitluck S."/>
            <person name="Pollard M."/>
            <person name="Predki P."/>
            <person name="Priest J."/>
            <person name="Ramirez L."/>
            <person name="Retterer J."/>
            <person name="Rodriguez A."/>
            <person name="Rogers S."/>
            <person name="Salamov A."/>
            <person name="Salazar A."/>
            <person name="Thayer N."/>
            <person name="Tice H."/>
            <person name="Tsai M."/>
            <person name="Ustaszewska A."/>
            <person name="Vo N."/>
            <person name="Wheeler J."/>
            <person name="Wu K."/>
            <person name="Yang J."/>
            <person name="Dickson M."/>
            <person name="Cheng J.-F."/>
            <person name="Eichler E.E."/>
            <person name="Olsen A."/>
            <person name="Pennacchio L.A."/>
            <person name="Rokhsar D.S."/>
            <person name="Richardson P."/>
            <person name="Lucas S.M."/>
            <person name="Myers R.M."/>
            <person name="Rubin E.M."/>
        </authorList>
    </citation>
    <scope>NUCLEOTIDE SEQUENCE [LARGE SCALE GENOMIC DNA]</scope>
</reference>
<reference key="5">
    <citation type="journal article" date="2004" name="Genome Res.">
        <title>The status, quality, and expansion of the NIH full-length cDNA project: the Mammalian Gene Collection (MGC).</title>
        <authorList>
            <consortium name="The MGC Project Team"/>
        </authorList>
    </citation>
    <scope>NUCLEOTIDE SEQUENCE [LARGE SCALE MRNA]</scope>
    <scope>VARIANT THR-234</scope>
    <source>
        <tissue>Bone marrow</tissue>
        <tissue>Brain</tissue>
        <tissue>Liver</tissue>
        <tissue>PNS</tissue>
    </source>
</reference>
<reference key="6">
    <citation type="journal article" date="1994" name="Biochim. Biophys. Acta">
        <title>Purification of selenoprotein P from human plasma.</title>
        <authorList>
            <person name="Aakesson B."/>
            <person name="Bellew T."/>
            <person name="Burk R.F."/>
        </authorList>
    </citation>
    <scope>PARTIAL PROTEIN SEQUENCE</scope>
    <scope>SUBCELLULAR LOCATION</scope>
</reference>
<reference key="7">
    <citation type="journal article" date="1998" name="Arch. Biochem. Biophys.">
        <title>A novel method for the purification of selenoprotein P from human plasma.</title>
        <authorList>
            <person name="Mostert V."/>
            <person name="Lombeck I."/>
            <person name="Abel J."/>
        </authorList>
    </citation>
    <scope>CHARACTERIZATION</scope>
</reference>
<reference key="8">
    <citation type="journal article" date="2000" name="Arch. Biochem. Biophys.">
        <title>Selenoprotein P: properties, functions, and regulation.</title>
        <authorList>
            <person name="Mostert V."/>
        </authorList>
    </citation>
    <scope>CHARACTERIZATION</scope>
</reference>
<reference key="9">
    <citation type="journal article" date="1994" name="J. Nutr.">
        <title>Selenoprotein P. A selenium-rich extracellular glycoprotein.</title>
        <authorList>
            <person name="Burk R.F."/>
            <person name="Hill K.E."/>
        </authorList>
    </citation>
    <scope>REVIEW</scope>
</reference>
<reference key="10">
    <citation type="journal article" date="2005" name="J. Proteome Res.">
        <title>Human plasma N-glycoproteome analysis by immunoaffinity subtraction, hydrazide chemistry, and mass spectrometry.</title>
        <authorList>
            <person name="Liu T."/>
            <person name="Qian W.-J."/>
            <person name="Gritsenko M.A."/>
            <person name="Camp D.G. II"/>
            <person name="Monroe M.E."/>
            <person name="Moore R.J."/>
            <person name="Smith R.D."/>
        </authorList>
    </citation>
    <scope>GLYCOSYLATION [LARGE SCALE ANALYSIS] AT ASN-83; ASN-119 AND ASN-128</scope>
    <source>
        <tissue>Plasma</tissue>
    </source>
</reference>
<reference key="11">
    <citation type="journal article" date="2009" name="J. Proteome Res.">
        <title>Glycoproteomics analysis of human liver tissue by combination of multiple enzyme digestion and hydrazide chemistry.</title>
        <authorList>
            <person name="Chen R."/>
            <person name="Jiang X."/>
            <person name="Sun D."/>
            <person name="Han G."/>
            <person name="Wang F."/>
            <person name="Ye M."/>
            <person name="Wang L."/>
            <person name="Zou H."/>
        </authorList>
    </citation>
    <scope>GLYCOSYLATION [LARGE SCALE ANALYSIS] AT ASN-83 AND ASN-119</scope>
    <source>
        <tissue>Liver</tissue>
    </source>
</reference>
<reference key="12">
    <citation type="journal article" date="2009" name="Mol. Cell. Proteomics">
        <title>A strategy for precise and large scale identification of core fucosylated glycoproteins.</title>
        <authorList>
            <person name="Jia W."/>
            <person name="Lu Z."/>
            <person name="Fu Y."/>
            <person name="Wang H.P."/>
            <person name="Wang L.H."/>
            <person name="Chi H."/>
            <person name="Yuan Z.F."/>
            <person name="Zheng Z.B."/>
            <person name="Song L.N."/>
            <person name="Han H.H."/>
            <person name="Liang Y.M."/>
            <person name="Wang J.L."/>
            <person name="Cai Y."/>
            <person name="Zhang Y.K."/>
            <person name="Deng Y.L."/>
            <person name="Ying W.T."/>
            <person name="He S.M."/>
            <person name="Qian X.H."/>
        </authorList>
    </citation>
    <scope>GLYCOSYLATION AT ASN-83</scope>
</reference>
<reference key="13">
    <citation type="journal article" date="2014" name="J. Proteomics">
        <title>An enzyme assisted RP-RPLC approach for in-depth analysis of human liver phosphoproteome.</title>
        <authorList>
            <person name="Bian Y."/>
            <person name="Song C."/>
            <person name="Cheng K."/>
            <person name="Dong M."/>
            <person name="Wang F."/>
            <person name="Huang J."/>
            <person name="Sun D."/>
            <person name="Wang L."/>
            <person name="Ye M."/>
            <person name="Zou H."/>
        </authorList>
    </citation>
    <scope>PHOSPHORYLATION [LARGE SCALE ANALYSIS] AT SER-266</scope>
    <scope>IDENTIFICATION BY MASS SPECTROMETRY [LARGE SCALE ANALYSIS]</scope>
    <source>
        <tissue>Liver</tissue>
    </source>
</reference>
<reference key="14">
    <citation type="journal article" date="2016" name="J. Biol. Chem.">
        <title>Selenoprotein gene nomenclature.</title>
        <authorList>
            <person name="Gladyshev V.N."/>
            <person name="Arner E.S."/>
            <person name="Berry M.J."/>
            <person name="Brigelius-Flohe R."/>
            <person name="Bruford E.A."/>
            <person name="Burk R.F."/>
            <person name="Carlson B.A."/>
            <person name="Castellano S."/>
            <person name="Chavatte L."/>
            <person name="Conrad M."/>
            <person name="Copeland P.R."/>
            <person name="Diamond A.M."/>
            <person name="Driscoll D.M."/>
            <person name="Ferreiro A."/>
            <person name="Flohe L."/>
            <person name="Green F.R."/>
            <person name="Guigo R."/>
            <person name="Handy D.E."/>
            <person name="Hatfield D.L."/>
            <person name="Hesketh J."/>
            <person name="Hoffmann P.R."/>
            <person name="Holmgren A."/>
            <person name="Hondal R.J."/>
            <person name="Howard M.T."/>
            <person name="Huang K."/>
            <person name="Kim H.Y."/>
            <person name="Kim I.Y."/>
            <person name="Koehrle J."/>
            <person name="Krol A."/>
            <person name="Kryukov G.V."/>
            <person name="Lee B.J."/>
            <person name="Lee B.C."/>
            <person name="Lei X.G."/>
            <person name="Liu Q."/>
            <person name="Lescure A."/>
            <person name="Lobanov A.V."/>
            <person name="Loscalzo J."/>
            <person name="Maiorino M."/>
            <person name="Mariotti M."/>
            <person name="Sandeep Prabhu K."/>
            <person name="Rayman M.P."/>
            <person name="Rozovsky S."/>
            <person name="Salinas G."/>
            <person name="Schmidt E.E."/>
            <person name="Schomburg L."/>
            <person name="Schweizer U."/>
            <person name="Simonovic M."/>
            <person name="Sunde R.A."/>
            <person name="Tsuji P.A."/>
            <person name="Tweedie S."/>
            <person name="Ursini F."/>
            <person name="Whanger P.D."/>
            <person name="Zhang Y."/>
        </authorList>
    </citation>
    <scope>NOMENCLATURE</scope>
</reference>
<organism>
    <name type="scientific">Homo sapiens</name>
    <name type="common">Human</name>
    <dbReference type="NCBI Taxonomy" id="9606"/>
    <lineage>
        <taxon>Eukaryota</taxon>
        <taxon>Metazoa</taxon>
        <taxon>Chordata</taxon>
        <taxon>Craniata</taxon>
        <taxon>Vertebrata</taxon>
        <taxon>Euteleostomi</taxon>
        <taxon>Mammalia</taxon>
        <taxon>Eutheria</taxon>
        <taxon>Euarchontoglires</taxon>
        <taxon>Primates</taxon>
        <taxon>Haplorrhini</taxon>
        <taxon>Catarrhini</taxon>
        <taxon>Hominidae</taxon>
        <taxon>Homo</taxon>
    </lineage>
</organism>
<sequence>MWRSLGLALALCLLPSGGTESQDQSSLCKQPPAWSIRDQDPMLNSNGSVTVVALLQASUYLCILQASKLEDLRVKLKKEGYSNISYIVVNHQGISSRLKYTHLKNKVSEHIPVYQQEENQTDVWTLLNGSKDDFLIYDRCGRLVYHLGLPFSFLTFPYVEEAIKIAYCEKKCGNCSLTTLKDEDFCKRVSLATVDKTVETPSPHYHHEHHHNHGHQHLGSSELSENQQPGAPNAPTHPAPPGLHHHHKHKGQHRQGHPENRDMPASEDLQDLQKKLCRKRCINQLLCKLPTDSELAPRSUCCHCRHLIFEKTGSAITUQCKENLPSLCSUQGLRAEENITESCQURLPPAAUQISQQLIPTEASASURUKNQAKKUEUPSN</sequence>
<gene>
    <name evidence="11 13" type="primary">SELENOP</name>
    <name evidence="13" type="synonym">SELP</name>
    <name type="synonym">SEPP1</name>
</gene>
<feature type="signal peptide">
    <location>
        <begin position="1"/>
        <end position="19"/>
    </location>
</feature>
<feature type="chain" id="PRO_0000022313" description="Selenoprotein P">
    <location>
        <begin position="20"/>
        <end position="381"/>
    </location>
</feature>
<feature type="region of interest" description="Disordered" evidence="4">
    <location>
        <begin position="200"/>
        <end position="268"/>
    </location>
</feature>
<feature type="region of interest" description="Disordered" evidence="4">
    <location>
        <begin position="355"/>
        <end position="381"/>
    </location>
</feature>
<feature type="compositionally biased region" description="Basic residues" evidence="4">
    <location>
        <begin position="204"/>
        <end position="216"/>
    </location>
</feature>
<feature type="compositionally biased region" description="Polar residues" evidence="4">
    <location>
        <begin position="218"/>
        <end position="230"/>
    </location>
</feature>
<feature type="compositionally biased region" description="Basic residues" evidence="4">
    <location>
        <begin position="243"/>
        <end position="255"/>
    </location>
</feature>
<feature type="non-standard amino acid" description="Selenocysteine">
    <location>
        <position position="59"/>
    </location>
</feature>
<feature type="non-standard amino acid" description="Selenocysteine">
    <location>
        <position position="300"/>
    </location>
</feature>
<feature type="non-standard amino acid" description="Selenocysteine">
    <location>
        <position position="318"/>
    </location>
</feature>
<feature type="non-standard amino acid" description="Selenocysteine">
    <location>
        <position position="330"/>
    </location>
</feature>
<feature type="non-standard amino acid" description="Selenocysteine">
    <location>
        <position position="345"/>
    </location>
</feature>
<feature type="non-standard amino acid" description="Selenocysteine">
    <location>
        <position position="352"/>
    </location>
</feature>
<feature type="non-standard amino acid" description="Selenocysteine">
    <location>
        <position position="367"/>
    </location>
</feature>
<feature type="non-standard amino acid" description="Selenocysteine">
    <location>
        <position position="369"/>
    </location>
</feature>
<feature type="non-standard amino acid" description="Selenocysteine">
    <location>
        <position position="376"/>
    </location>
</feature>
<feature type="non-standard amino acid" description="Selenocysteine">
    <location>
        <position position="378"/>
    </location>
</feature>
<feature type="modified residue" description="Phosphoserine" evidence="14">
    <location>
        <position position="266"/>
    </location>
</feature>
<feature type="glycosylation site" description="N-linked (GlcNAc...) asparagine" evidence="3">
    <location>
        <position position="46"/>
    </location>
</feature>
<feature type="glycosylation site" description="N-linked (GlcNAc...) (complex) asparagine" evidence="6 7 8">
    <location>
        <position position="83"/>
    </location>
</feature>
<feature type="glycosylation site" description="N-linked (GlcNAc...) asparagine" evidence="6 8">
    <location>
        <position position="119"/>
    </location>
</feature>
<feature type="glycosylation site" description="N-linked (GlcNAc...) asparagine" evidence="6">
    <location>
        <position position="128"/>
    </location>
</feature>
<feature type="glycosylation site" description="N-linked (GlcNAc...) asparagine" evidence="1">
    <location>
        <position position="174"/>
    </location>
</feature>
<feature type="glycosylation site" description="N-linked (GlcNAc...) asparagine" evidence="3">
    <location>
        <position position="338"/>
    </location>
</feature>
<feature type="sequence variant" id="VAR_023256" description="In dbSNP:rs28919895." evidence="10">
    <original>P</original>
    <variation>S</variation>
    <location>
        <position position="112"/>
    </location>
</feature>
<feature type="sequence variant" id="VAR_023257" description="In dbSNP:rs3877899." evidence="5 10">
    <original>A</original>
    <variation>T</variation>
    <location>
        <position position="234"/>
    </location>
</feature>
<feature type="sequence variant" id="VAR_023258" description="In dbSNP:rs28919923." evidence="10">
    <original>R</original>
    <variation>Q</variation>
    <location>
        <position position="278"/>
    </location>
</feature>
<feature type="sequence variant" id="VAR_023259" description="In dbSNP:rs28919925." evidence="10">
    <original>S</original>
    <variation>P</variation>
    <location>
        <position position="314"/>
    </location>
</feature>
<feature type="sequence variant" id="VAR_023260" description="In dbSNP:rs28919926." evidence="10">
    <original>R</original>
    <variation>C</variation>
    <location>
        <position position="368"/>
    </location>
</feature>
<feature type="sequence conflict" description="In Ref. 1; CAA77836." evidence="12" ref="1">
    <original>LQ</original>
    <variation>IE</variation>
    <location>
        <begin position="64"/>
        <end position="65"/>
    </location>
</feature>
<feature type="sequence conflict" description="In Ref. 5; AAH15875." evidence="12" ref="5">
    <original>K</original>
    <variation>E</variation>
    <location>
        <position position="187"/>
    </location>
</feature>
<feature type="sequence conflict" description="In Ref. 5; AAH46152." evidence="12" ref="5">
    <original>L</original>
    <variation>F</variation>
    <location>
        <position position="347"/>
    </location>
</feature>
<proteinExistence type="evidence at protein level"/>
<protein>
    <recommendedName>
        <fullName evidence="11">Selenoprotein P</fullName>
        <shortName>SeP</shortName>
    </recommendedName>
</protein>
<accession>P49908</accession>
<accession>Q6PD59</accession>
<accession>Q6PI43</accession>
<accession>Q6PI87</accession>
<accession>Q6PJF9</accession>
<dbReference type="EMBL" id="Z11793">
    <property type="protein sequence ID" value="CAA77836.2"/>
    <property type="molecule type" value="mRNA"/>
</dbReference>
<dbReference type="EMBL" id="DQ022288">
    <property type="protein sequence ID" value="AAY26400.1"/>
    <property type="molecule type" value="Genomic_DNA"/>
</dbReference>
<dbReference type="EMBL" id="AC008945">
    <property type="status" value="NOT_ANNOTATED_CDS"/>
    <property type="molecule type" value="Genomic_DNA"/>
</dbReference>
<dbReference type="EMBL" id="BC005244">
    <property type="status" value="NOT_ANNOTATED_CDS"/>
    <property type="molecule type" value="mRNA"/>
</dbReference>
<dbReference type="EMBL" id="BC015875">
    <property type="protein sequence ID" value="AAH15875.1"/>
    <property type="molecule type" value="mRNA"/>
</dbReference>
<dbReference type="EMBL" id="BC040075">
    <property type="protein sequence ID" value="AAH40075.1"/>
    <property type="molecule type" value="mRNA"/>
</dbReference>
<dbReference type="EMBL" id="BC046152">
    <property type="protein sequence ID" value="AAH46152.1"/>
    <property type="molecule type" value="mRNA"/>
</dbReference>
<dbReference type="EMBL" id="BC058919">
    <property type="protein sequence ID" value="AAH58919.1"/>
    <property type="molecule type" value="mRNA"/>
</dbReference>
<dbReference type="CCDS" id="CCDS43311.1"/>
<dbReference type="PIR" id="A47327">
    <property type="entry name" value="A47327"/>
</dbReference>
<dbReference type="RefSeq" id="NP_001078955.1">
    <property type="nucleotide sequence ID" value="NM_001085486.3"/>
</dbReference>
<dbReference type="RefSeq" id="NP_001087195.1">
    <property type="nucleotide sequence ID" value="NM_001093726.2"/>
</dbReference>
<dbReference type="RefSeq" id="NP_005401.3">
    <property type="nucleotide sequence ID" value="NM_005410.3"/>
</dbReference>
<dbReference type="BioGRID" id="112313">
    <property type="interactions" value="7"/>
</dbReference>
<dbReference type="FunCoup" id="P49908">
    <property type="interactions" value="76"/>
</dbReference>
<dbReference type="IntAct" id="P49908">
    <property type="interactions" value="16"/>
</dbReference>
<dbReference type="STRING" id="9606.ENSP00000425915"/>
<dbReference type="DrugBank" id="DB11127">
    <property type="generic name" value="Selenious acid"/>
</dbReference>
<dbReference type="DrugBank" id="DB01593">
    <property type="generic name" value="Zinc"/>
</dbReference>
<dbReference type="DrugBank" id="DB14487">
    <property type="generic name" value="Zinc acetate"/>
</dbReference>
<dbReference type="DrugBank" id="DB14533">
    <property type="generic name" value="Zinc chloride"/>
</dbReference>
<dbReference type="DrugBank" id="DB14548">
    <property type="generic name" value="Zinc sulfate, unspecified form"/>
</dbReference>
<dbReference type="TCDB" id="9.B.87.1.45">
    <property type="family name" value="the selenoprotein p receptor (selp-receptor) family"/>
</dbReference>
<dbReference type="GlyConnect" id="1729">
    <property type="glycosylation" value="10 N-Linked glycans (3 sites)"/>
</dbReference>
<dbReference type="GlyCosmos" id="P49908">
    <property type="glycosylation" value="7 sites, 18 glycans"/>
</dbReference>
<dbReference type="GlyGen" id="P49908">
    <property type="glycosylation" value="9 sites, 49 N-linked glycans (3 sites), 4 O-linked glycans (3 sites)"/>
</dbReference>
<dbReference type="iPTMnet" id="P49908"/>
<dbReference type="PhosphoSitePlus" id="P49908"/>
<dbReference type="BioMuta" id="SELENOP"/>
<dbReference type="DMDM" id="172046864"/>
<dbReference type="jPOST" id="P49908"/>
<dbReference type="MassIVE" id="P49908"/>
<dbReference type="PaxDb" id="9606-ENSP00000420939"/>
<dbReference type="PeptideAtlas" id="P49908"/>
<dbReference type="ProteomicsDB" id="56176"/>
<dbReference type="Antibodypedia" id="43718">
    <property type="antibodies" value="163 antibodies from 22 providers"/>
</dbReference>
<dbReference type="DNASU" id="6414"/>
<dbReference type="Ensembl" id="ENST00000506577.5">
    <property type="protein sequence ID" value="ENSP00000425915.1"/>
    <property type="gene ID" value="ENSG00000250722.6"/>
</dbReference>
<dbReference type="Ensembl" id="ENST00000511224.5">
    <property type="protein sequence ID" value="ENSP00000427671.1"/>
    <property type="gene ID" value="ENSG00000250722.6"/>
</dbReference>
<dbReference type="Ensembl" id="ENST00000514985.6">
    <property type="protein sequence ID" value="ENSP00000420939.1"/>
    <property type="gene ID" value="ENSG00000250722.6"/>
</dbReference>
<dbReference type="GeneID" id="6414"/>
<dbReference type="KEGG" id="hsa:6414"/>
<dbReference type="MANE-Select" id="ENST00000514985.6">
    <property type="protein sequence ID" value="ENSP00000420939.1"/>
    <property type="RefSeq nucleotide sequence ID" value="NM_005410.4"/>
    <property type="RefSeq protein sequence ID" value="NP_005401.3"/>
</dbReference>
<dbReference type="UCSC" id="uc011cpt.3">
    <property type="organism name" value="human"/>
</dbReference>
<dbReference type="AGR" id="HGNC:10751"/>
<dbReference type="CTD" id="6414"/>
<dbReference type="DisGeNET" id="6414"/>
<dbReference type="GeneCards" id="SELENOP"/>
<dbReference type="HGNC" id="HGNC:10751">
    <property type="gene designation" value="SELENOP"/>
</dbReference>
<dbReference type="HPA" id="ENSG00000250722">
    <property type="expression patterns" value="Group enriched (intestine, liver)"/>
</dbReference>
<dbReference type="MIM" id="601484">
    <property type="type" value="gene"/>
</dbReference>
<dbReference type="neXtProt" id="NX_P49908"/>
<dbReference type="OpenTargets" id="ENSG00000250722"/>
<dbReference type="PharmGKB" id="PA35672"/>
<dbReference type="VEuPathDB" id="HostDB:ENSG00000250722"/>
<dbReference type="eggNOG" id="ENOG502QWRU">
    <property type="taxonomic scope" value="Eukaryota"/>
</dbReference>
<dbReference type="GeneTree" id="ENSGT00510000049326"/>
<dbReference type="InParanoid" id="P49908"/>
<dbReference type="OMA" id="XQASQQL"/>
<dbReference type="OrthoDB" id="6134775at2759"/>
<dbReference type="PAN-GO" id="P49908">
    <property type="GO annotations" value="3 GO annotations based on evolutionary models"/>
</dbReference>
<dbReference type="PhylomeDB" id="P49908"/>
<dbReference type="TreeFam" id="TF333425"/>
<dbReference type="PathwayCommons" id="P49908"/>
<dbReference type="Reactome" id="R-HSA-114608">
    <property type="pathway name" value="Platelet degranulation"/>
</dbReference>
<dbReference type="SignaLink" id="P49908"/>
<dbReference type="BioGRID-ORCS" id="6414">
    <property type="hits" value="10 hits in 1152 CRISPR screens"/>
</dbReference>
<dbReference type="ChiTaRS" id="SELENOP">
    <property type="organism name" value="human"/>
</dbReference>
<dbReference type="GeneWiki" id="SEPP1"/>
<dbReference type="GenomeRNAi" id="6414"/>
<dbReference type="Pharos" id="P49908">
    <property type="development level" value="Tbio"/>
</dbReference>
<dbReference type="PRO" id="PR:P49908"/>
<dbReference type="Proteomes" id="UP000005640">
    <property type="component" value="Chromosome 5"/>
</dbReference>
<dbReference type="RNAct" id="P49908">
    <property type="molecule type" value="protein"/>
</dbReference>
<dbReference type="Bgee" id="ENSG00000250722">
    <property type="expression patterns" value="Expressed in jejunal mucosa and 207 other cell types or tissues"/>
</dbReference>
<dbReference type="ExpressionAtlas" id="P49908">
    <property type="expression patterns" value="baseline and differential"/>
</dbReference>
<dbReference type="GO" id="GO:0070062">
    <property type="term" value="C:extracellular exosome"/>
    <property type="evidence" value="ECO:0007005"/>
    <property type="project" value="UniProtKB"/>
</dbReference>
<dbReference type="GO" id="GO:0005576">
    <property type="term" value="C:extracellular region"/>
    <property type="evidence" value="ECO:0000318"/>
    <property type="project" value="GO_Central"/>
</dbReference>
<dbReference type="GO" id="GO:0031089">
    <property type="term" value="C:platelet dense granule lumen"/>
    <property type="evidence" value="ECO:0000304"/>
    <property type="project" value="Reactome"/>
</dbReference>
<dbReference type="GO" id="GO:0008430">
    <property type="term" value="F:selenium binding"/>
    <property type="evidence" value="ECO:0000318"/>
    <property type="project" value="GO_Central"/>
</dbReference>
<dbReference type="GO" id="GO:0007420">
    <property type="term" value="P:brain development"/>
    <property type="evidence" value="ECO:0007669"/>
    <property type="project" value="Ensembl"/>
</dbReference>
<dbReference type="GO" id="GO:0007626">
    <property type="term" value="P:locomotory behavior"/>
    <property type="evidence" value="ECO:0007669"/>
    <property type="project" value="Ensembl"/>
</dbReference>
<dbReference type="GO" id="GO:0009791">
    <property type="term" value="P:post-embryonic development"/>
    <property type="evidence" value="ECO:0007669"/>
    <property type="project" value="Ensembl"/>
</dbReference>
<dbReference type="GO" id="GO:0040008">
    <property type="term" value="P:regulation of growth"/>
    <property type="evidence" value="ECO:0007669"/>
    <property type="project" value="Ensembl"/>
</dbReference>
<dbReference type="GO" id="GO:0006979">
    <property type="term" value="P:response to oxidative stress"/>
    <property type="evidence" value="ECO:0000304"/>
    <property type="project" value="ProtInc"/>
</dbReference>
<dbReference type="GO" id="GO:0010269">
    <property type="term" value="P:response to selenium ion"/>
    <property type="evidence" value="ECO:0007669"/>
    <property type="project" value="Ensembl"/>
</dbReference>
<dbReference type="GO" id="GO:0001887">
    <property type="term" value="P:selenium compound metabolic process"/>
    <property type="evidence" value="ECO:0000318"/>
    <property type="project" value="GO_Central"/>
</dbReference>
<dbReference type="GO" id="GO:0019953">
    <property type="term" value="P:sexual reproduction"/>
    <property type="evidence" value="ECO:0007669"/>
    <property type="project" value="Ensembl"/>
</dbReference>
<dbReference type="InterPro" id="IPR007671">
    <property type="entry name" value="Selenoprotein-P_N"/>
</dbReference>
<dbReference type="InterPro" id="IPR007672">
    <property type="entry name" value="SelP_C"/>
</dbReference>
<dbReference type="InterPro" id="IPR037941">
    <property type="entry name" value="SeP"/>
</dbReference>
<dbReference type="PANTHER" id="PTHR10105">
    <property type="entry name" value="SELENOPROTEIN P"/>
    <property type="match status" value="1"/>
</dbReference>
<dbReference type="PANTHER" id="PTHR10105:SF3">
    <property type="entry name" value="SELENOPROTEIN P"/>
    <property type="match status" value="1"/>
</dbReference>
<dbReference type="Pfam" id="PF04593">
    <property type="entry name" value="SelP_C"/>
    <property type="match status" value="1"/>
</dbReference>
<dbReference type="Pfam" id="PF04592">
    <property type="entry name" value="SelP_N"/>
    <property type="match status" value="1"/>
</dbReference>
<keyword id="KW-0903">Direct protein sequencing</keyword>
<keyword id="KW-0325">Glycoprotein</keyword>
<keyword id="KW-0597">Phosphoprotein</keyword>
<keyword id="KW-1267">Proteomics identification</keyword>
<keyword id="KW-1185">Reference proteome</keyword>
<keyword id="KW-0964">Secreted</keyword>
<keyword id="KW-0711">Selenium</keyword>
<keyword id="KW-0712">Selenocysteine</keyword>
<keyword id="KW-0732">Signal</keyword>